<dbReference type="EC" id="6.1.1.7" evidence="1"/>
<dbReference type="EMBL" id="CP000580">
    <property type="protein sequence ID" value="ABN98171.1"/>
    <property type="molecule type" value="Genomic_DNA"/>
</dbReference>
<dbReference type="SMR" id="A3PZ44"/>
<dbReference type="KEGG" id="mjl:Mjls_2387"/>
<dbReference type="HOGENOM" id="CLU_004485_1_1_11"/>
<dbReference type="BioCyc" id="MSP164757:G1G8C-2406-MONOMER"/>
<dbReference type="GO" id="GO:0005829">
    <property type="term" value="C:cytosol"/>
    <property type="evidence" value="ECO:0007669"/>
    <property type="project" value="TreeGrafter"/>
</dbReference>
<dbReference type="GO" id="GO:0004813">
    <property type="term" value="F:alanine-tRNA ligase activity"/>
    <property type="evidence" value="ECO:0007669"/>
    <property type="project" value="UniProtKB-UniRule"/>
</dbReference>
<dbReference type="GO" id="GO:0002161">
    <property type="term" value="F:aminoacyl-tRNA deacylase activity"/>
    <property type="evidence" value="ECO:0007669"/>
    <property type="project" value="TreeGrafter"/>
</dbReference>
<dbReference type="GO" id="GO:0005524">
    <property type="term" value="F:ATP binding"/>
    <property type="evidence" value="ECO:0007669"/>
    <property type="project" value="UniProtKB-UniRule"/>
</dbReference>
<dbReference type="GO" id="GO:0000049">
    <property type="term" value="F:tRNA binding"/>
    <property type="evidence" value="ECO:0007669"/>
    <property type="project" value="UniProtKB-KW"/>
</dbReference>
<dbReference type="GO" id="GO:0008270">
    <property type="term" value="F:zinc ion binding"/>
    <property type="evidence" value="ECO:0007669"/>
    <property type="project" value="UniProtKB-UniRule"/>
</dbReference>
<dbReference type="GO" id="GO:0006419">
    <property type="term" value="P:alanyl-tRNA aminoacylation"/>
    <property type="evidence" value="ECO:0007669"/>
    <property type="project" value="UniProtKB-UniRule"/>
</dbReference>
<dbReference type="CDD" id="cd00673">
    <property type="entry name" value="AlaRS_core"/>
    <property type="match status" value="1"/>
</dbReference>
<dbReference type="FunFam" id="3.10.310.40:FF:000001">
    <property type="entry name" value="Alanine--tRNA ligase"/>
    <property type="match status" value="1"/>
</dbReference>
<dbReference type="FunFam" id="3.30.54.20:FF:000001">
    <property type="entry name" value="Alanine--tRNA ligase"/>
    <property type="match status" value="1"/>
</dbReference>
<dbReference type="FunFam" id="3.30.930.10:FF:000004">
    <property type="entry name" value="Alanine--tRNA ligase"/>
    <property type="match status" value="1"/>
</dbReference>
<dbReference type="FunFam" id="3.30.980.10:FF:000004">
    <property type="entry name" value="Alanine--tRNA ligase, cytoplasmic"/>
    <property type="match status" value="1"/>
</dbReference>
<dbReference type="Gene3D" id="2.40.30.130">
    <property type="match status" value="1"/>
</dbReference>
<dbReference type="Gene3D" id="3.10.310.40">
    <property type="match status" value="1"/>
</dbReference>
<dbReference type="Gene3D" id="3.30.54.20">
    <property type="match status" value="1"/>
</dbReference>
<dbReference type="Gene3D" id="6.10.250.550">
    <property type="match status" value="1"/>
</dbReference>
<dbReference type="Gene3D" id="3.30.930.10">
    <property type="entry name" value="Bira Bifunctional Protein, Domain 2"/>
    <property type="match status" value="1"/>
</dbReference>
<dbReference type="Gene3D" id="3.30.980.10">
    <property type="entry name" value="Threonyl-trna Synthetase, Chain A, domain 2"/>
    <property type="match status" value="1"/>
</dbReference>
<dbReference type="HAMAP" id="MF_00036_B">
    <property type="entry name" value="Ala_tRNA_synth_B"/>
    <property type="match status" value="1"/>
</dbReference>
<dbReference type="InterPro" id="IPR045864">
    <property type="entry name" value="aa-tRNA-synth_II/BPL/LPL"/>
</dbReference>
<dbReference type="InterPro" id="IPR002318">
    <property type="entry name" value="Ala-tRNA-lgiase_IIc"/>
</dbReference>
<dbReference type="InterPro" id="IPR018162">
    <property type="entry name" value="Ala-tRNA-ligase_IIc_anticod-bd"/>
</dbReference>
<dbReference type="InterPro" id="IPR018165">
    <property type="entry name" value="Ala-tRNA-synth_IIc_core"/>
</dbReference>
<dbReference type="InterPro" id="IPR018164">
    <property type="entry name" value="Ala-tRNA-synth_IIc_N"/>
</dbReference>
<dbReference type="InterPro" id="IPR050058">
    <property type="entry name" value="Ala-tRNA_ligase"/>
</dbReference>
<dbReference type="InterPro" id="IPR023033">
    <property type="entry name" value="Ala_tRNA_ligase_euk/bac"/>
</dbReference>
<dbReference type="InterPro" id="IPR003156">
    <property type="entry name" value="DHHA1_dom"/>
</dbReference>
<dbReference type="InterPro" id="IPR018163">
    <property type="entry name" value="Thr/Ala-tRNA-synth_IIc_edit"/>
</dbReference>
<dbReference type="InterPro" id="IPR009000">
    <property type="entry name" value="Transl_B-barrel_sf"/>
</dbReference>
<dbReference type="InterPro" id="IPR012947">
    <property type="entry name" value="tRNA_SAD"/>
</dbReference>
<dbReference type="NCBIfam" id="TIGR00344">
    <property type="entry name" value="alaS"/>
    <property type="match status" value="1"/>
</dbReference>
<dbReference type="PANTHER" id="PTHR11777:SF9">
    <property type="entry name" value="ALANINE--TRNA LIGASE, CYTOPLASMIC"/>
    <property type="match status" value="1"/>
</dbReference>
<dbReference type="PANTHER" id="PTHR11777">
    <property type="entry name" value="ALANYL-TRNA SYNTHETASE"/>
    <property type="match status" value="1"/>
</dbReference>
<dbReference type="Pfam" id="PF02272">
    <property type="entry name" value="DHHA1"/>
    <property type="match status" value="1"/>
</dbReference>
<dbReference type="Pfam" id="PF01411">
    <property type="entry name" value="tRNA-synt_2c"/>
    <property type="match status" value="1"/>
</dbReference>
<dbReference type="Pfam" id="PF07973">
    <property type="entry name" value="tRNA_SAD"/>
    <property type="match status" value="1"/>
</dbReference>
<dbReference type="PRINTS" id="PR00980">
    <property type="entry name" value="TRNASYNTHALA"/>
</dbReference>
<dbReference type="SMART" id="SM00863">
    <property type="entry name" value="tRNA_SAD"/>
    <property type="match status" value="1"/>
</dbReference>
<dbReference type="SUPFAM" id="SSF55681">
    <property type="entry name" value="Class II aaRS and biotin synthetases"/>
    <property type="match status" value="1"/>
</dbReference>
<dbReference type="SUPFAM" id="SSF101353">
    <property type="entry name" value="Putative anticodon-binding domain of alanyl-tRNA synthetase (AlaRS)"/>
    <property type="match status" value="1"/>
</dbReference>
<dbReference type="SUPFAM" id="SSF55186">
    <property type="entry name" value="ThrRS/AlaRS common domain"/>
    <property type="match status" value="1"/>
</dbReference>
<dbReference type="SUPFAM" id="SSF50447">
    <property type="entry name" value="Translation proteins"/>
    <property type="match status" value="1"/>
</dbReference>
<dbReference type="PROSITE" id="PS50860">
    <property type="entry name" value="AA_TRNA_LIGASE_II_ALA"/>
    <property type="match status" value="1"/>
</dbReference>
<proteinExistence type="inferred from homology"/>
<organism>
    <name type="scientific">Mycobacterium sp. (strain JLS)</name>
    <dbReference type="NCBI Taxonomy" id="164757"/>
    <lineage>
        <taxon>Bacteria</taxon>
        <taxon>Bacillati</taxon>
        <taxon>Actinomycetota</taxon>
        <taxon>Actinomycetes</taxon>
        <taxon>Mycobacteriales</taxon>
        <taxon>Mycobacteriaceae</taxon>
        <taxon>Mycobacterium</taxon>
    </lineage>
</organism>
<gene>
    <name evidence="1" type="primary">alaS</name>
    <name type="ordered locus">Mjls_2387</name>
</gene>
<reference key="1">
    <citation type="submission" date="2007-02" db="EMBL/GenBank/DDBJ databases">
        <title>Complete sequence of Mycobacterium sp. JLS.</title>
        <authorList>
            <consortium name="US DOE Joint Genome Institute"/>
            <person name="Copeland A."/>
            <person name="Lucas S."/>
            <person name="Lapidus A."/>
            <person name="Barry K."/>
            <person name="Detter J.C."/>
            <person name="Glavina del Rio T."/>
            <person name="Hammon N."/>
            <person name="Israni S."/>
            <person name="Dalin E."/>
            <person name="Tice H."/>
            <person name="Pitluck S."/>
            <person name="Chain P."/>
            <person name="Malfatti S."/>
            <person name="Shin M."/>
            <person name="Vergez L."/>
            <person name="Schmutz J."/>
            <person name="Larimer F."/>
            <person name="Land M."/>
            <person name="Hauser L."/>
            <person name="Kyrpides N."/>
            <person name="Mikhailova N."/>
            <person name="Miller C.D."/>
            <person name="Anderson A.J."/>
            <person name="Sims R.C."/>
            <person name="Richardson P."/>
        </authorList>
    </citation>
    <scope>NUCLEOTIDE SEQUENCE [LARGE SCALE GENOMIC DNA]</scope>
    <source>
        <strain>JLS</strain>
    </source>
</reference>
<keyword id="KW-0030">Aminoacyl-tRNA synthetase</keyword>
<keyword id="KW-0067">ATP-binding</keyword>
<keyword id="KW-0963">Cytoplasm</keyword>
<keyword id="KW-0436">Ligase</keyword>
<keyword id="KW-0479">Metal-binding</keyword>
<keyword id="KW-0547">Nucleotide-binding</keyword>
<keyword id="KW-0648">Protein biosynthesis</keyword>
<keyword id="KW-0694">RNA-binding</keyword>
<keyword id="KW-0820">tRNA-binding</keyword>
<keyword id="KW-0862">Zinc</keyword>
<name>SYA_MYCSJ</name>
<sequence>MQTHEIRKRFLDHFVKAGHTEVPSASVILDDPNLLFVNAGMVQFVPFFLGQRTPPYQRATSIQKCIRTPDIDEVGITTRHNTFFQMAGNFSFGDYFKKGAIEFAWTLLTNPVDQSGYGFDPEKLWATVYLDDDEAIQLWQEVAGLPLERIQRRGMADNYWSMGIPGPCGPSSEIYVDRGPEYGIEGGPEANEDRYIEIWNLVFMQNERGEGTGKSDFEILGPLPRKNIDTGMGIERVACLLQGVDNVYETDLLRPVIDAVAARAPRGYGRGSHSDDVRYRIIADHSRTAAILIGDGVSPGNDGRGYVLRRLLRRVIRSAKLLGIDDAVVGDLMATVRDAMGPSYPELVTDFDRIQRIAVAEETAFNRTLSSGSRLFEEAAQSTKAAGADRLSGRDAFTLHDTYGFPIELTLEMAAEADLAVDEEGFRSLMAEQRQRAKADAAARKQAHTDLTAYRELVDAHPTQFTGFDELTTEARILGIFVDGRRVPVVGHDTATAQHRIELVLDRSPFYAESGGQIADEGTITGTGASQTAKAAVSDVQKIAKTLWVHRVTVESGEFVEGDTVTAAVDPRWRHGATQGHSGTHMVHAALRQVLGPNAVQAGSLNRPGYLRFDFNWQGALTDDQRTQIEEVTNEAVEADFEVHSFTTELEKAKSMGAMALFGEAYPDEVRVVEIGGPFSLELCGGTHVRSSAQIGPVTILGESSVGSGVRRVEAYVGLDSFRHLAKERALMAGLASSLKVPSEEVPARVAGLVERLKAAEKELDRMRLANARAAAVNAVAGAERVGKVRLVAQRMAGGMSAGDLRTLVGDIRGKLGGDPAVVALIAEGDNDTVPFVVAVNPAAQDLGLRANELVKQFGAAVNGRGGGKADLAQGSGKGAAGIDAALAALRAEIDRS</sequence>
<accession>A3PZ44</accession>
<feature type="chain" id="PRO_0000347684" description="Alanine--tRNA ligase">
    <location>
        <begin position="1"/>
        <end position="897"/>
    </location>
</feature>
<feature type="binding site" evidence="1">
    <location>
        <position position="581"/>
    </location>
    <ligand>
        <name>Zn(2+)</name>
        <dbReference type="ChEBI" id="CHEBI:29105"/>
    </ligand>
</feature>
<feature type="binding site" evidence="1">
    <location>
        <position position="585"/>
    </location>
    <ligand>
        <name>Zn(2+)</name>
        <dbReference type="ChEBI" id="CHEBI:29105"/>
    </ligand>
</feature>
<feature type="binding site" evidence="1">
    <location>
        <position position="684"/>
    </location>
    <ligand>
        <name>Zn(2+)</name>
        <dbReference type="ChEBI" id="CHEBI:29105"/>
    </ligand>
</feature>
<feature type="binding site" evidence="1">
    <location>
        <position position="688"/>
    </location>
    <ligand>
        <name>Zn(2+)</name>
        <dbReference type="ChEBI" id="CHEBI:29105"/>
    </ligand>
</feature>
<evidence type="ECO:0000255" key="1">
    <source>
        <dbReference type="HAMAP-Rule" id="MF_00036"/>
    </source>
</evidence>
<comment type="function">
    <text evidence="1">Catalyzes the attachment of alanine to tRNA(Ala) in a two-step reaction: alanine is first activated by ATP to form Ala-AMP and then transferred to the acceptor end of tRNA(Ala). Also edits incorrectly charged Ser-tRNA(Ala) and Gly-tRNA(Ala) via its editing domain.</text>
</comment>
<comment type="catalytic activity">
    <reaction evidence="1">
        <text>tRNA(Ala) + L-alanine + ATP = L-alanyl-tRNA(Ala) + AMP + diphosphate</text>
        <dbReference type="Rhea" id="RHEA:12540"/>
        <dbReference type="Rhea" id="RHEA-COMP:9657"/>
        <dbReference type="Rhea" id="RHEA-COMP:9923"/>
        <dbReference type="ChEBI" id="CHEBI:30616"/>
        <dbReference type="ChEBI" id="CHEBI:33019"/>
        <dbReference type="ChEBI" id="CHEBI:57972"/>
        <dbReference type="ChEBI" id="CHEBI:78442"/>
        <dbReference type="ChEBI" id="CHEBI:78497"/>
        <dbReference type="ChEBI" id="CHEBI:456215"/>
        <dbReference type="EC" id="6.1.1.7"/>
    </reaction>
</comment>
<comment type="cofactor">
    <cofactor evidence="1">
        <name>Zn(2+)</name>
        <dbReference type="ChEBI" id="CHEBI:29105"/>
    </cofactor>
    <text evidence="1">Binds 1 zinc ion per subunit.</text>
</comment>
<comment type="subcellular location">
    <subcellularLocation>
        <location evidence="1">Cytoplasm</location>
    </subcellularLocation>
</comment>
<comment type="domain">
    <text evidence="1">Consists of three domains; the N-terminal catalytic domain, the editing domain and the C-terminal C-Ala domain. The editing domain removes incorrectly charged amino acids, while the C-Ala domain, along with tRNA(Ala), serves as a bridge to cooperatively bring together the editing and aminoacylation centers thus stimulating deacylation of misacylated tRNAs.</text>
</comment>
<comment type="similarity">
    <text evidence="1">Belongs to the class-II aminoacyl-tRNA synthetase family.</text>
</comment>
<protein>
    <recommendedName>
        <fullName evidence="1">Alanine--tRNA ligase</fullName>
        <ecNumber evidence="1">6.1.1.7</ecNumber>
    </recommendedName>
    <alternativeName>
        <fullName evidence="1">Alanyl-tRNA synthetase</fullName>
        <shortName evidence="1">AlaRS</shortName>
    </alternativeName>
</protein>